<comment type="function">
    <text evidence="2">Serine protease with chymotryptic, collagenolytic and SANA activities.</text>
</comment>
<comment type="catalytic activity">
    <reaction>
        <text>Hydrolysis of proteins, with broad specificity for peptide bonds. Native collagen is cleaved about 75% of the length of the molecule from the N-terminus. Low activity on small molecule substrates of both trypsin and chymotrypsin.</text>
        <dbReference type="EC" id="3.4.21.32"/>
    </reaction>
</comment>
<comment type="biophysicochemical properties">
    <phDependence>
        <text>Optimum pH is 7-8.</text>
    </phDependence>
    <temperatureDependence>
        <text>Optimum temperature is 30 degrees Celsius.</text>
    </temperatureDependence>
</comment>
<comment type="subunit">
    <text evidence="2">Monomer.</text>
</comment>
<comment type="subcellular location">
    <subcellularLocation>
        <location>Secreted</location>
        <location>Extracellular space</location>
    </subcellularLocation>
</comment>
<comment type="similarity">
    <text evidence="1">Belongs to the peptidase S1 family.</text>
</comment>
<accession>P81609</accession>
<keyword id="KW-0177">Collagen degradation</keyword>
<keyword id="KW-0903">Direct protein sequencing</keyword>
<keyword id="KW-0378">Hydrolase</keyword>
<keyword id="KW-0645">Protease</keyword>
<keyword id="KW-0964">Secreted</keyword>
<keyword id="KW-0720">Serine protease</keyword>
<proteinExistence type="evidence at protein level"/>
<dbReference type="EC" id="3.4.21.32"/>
<dbReference type="GO" id="GO:0005576">
    <property type="term" value="C:extracellular region"/>
    <property type="evidence" value="ECO:0007669"/>
    <property type="project" value="UniProtKB-SubCell"/>
</dbReference>
<dbReference type="GO" id="GO:0008236">
    <property type="term" value="F:serine-type peptidase activity"/>
    <property type="evidence" value="ECO:0007669"/>
    <property type="project" value="UniProtKB-KW"/>
</dbReference>
<dbReference type="GO" id="GO:0030574">
    <property type="term" value="P:collagen catabolic process"/>
    <property type="evidence" value="ECO:0007669"/>
    <property type="project" value="UniProtKB-KW"/>
</dbReference>
<dbReference type="GO" id="GO:0006508">
    <property type="term" value="P:proteolysis"/>
    <property type="evidence" value="ECO:0007669"/>
    <property type="project" value="UniProtKB-KW"/>
</dbReference>
<dbReference type="FunFam" id="2.40.10.10:FF:000253">
    <property type="match status" value="1"/>
</dbReference>
<reference evidence="4" key="1">
    <citation type="journal article" date="1996" name="Comp. Biochem. Physiol.">
        <title>Purification, kinetical and molecular characterizations of a serine collagenolytic protease from greenshore crab (Carcinus maenas) digestive gland.</title>
        <authorList>
            <person name="Roy P."/>
            <person name="Colas B."/>
            <person name="Durand P."/>
        </authorList>
    </citation>
    <scope>PROTEIN SEQUENCE</scope>
    <source>
        <tissue evidence="2">Digestive gland</tissue>
    </source>
</reference>
<organism>
    <name type="scientific">Carcinus maenas</name>
    <name type="common">Common shore crab</name>
    <name type="synonym">Green crab</name>
    <dbReference type="NCBI Taxonomy" id="6759"/>
    <lineage>
        <taxon>Eukaryota</taxon>
        <taxon>Metazoa</taxon>
        <taxon>Ecdysozoa</taxon>
        <taxon>Arthropoda</taxon>
        <taxon>Crustacea</taxon>
        <taxon>Multicrustacea</taxon>
        <taxon>Malacostraca</taxon>
        <taxon>Eumalacostraca</taxon>
        <taxon>Eucarida</taxon>
        <taxon>Decapoda</taxon>
        <taxon>Pleocyemata</taxon>
        <taxon>Brachyura</taxon>
        <taxon>Eubrachyura</taxon>
        <taxon>Portunoidea</taxon>
        <taxon>Carcinidae</taxon>
        <taxon>Carcinus</taxon>
    </lineage>
</organism>
<feature type="chain" id="PRO_0000088665" description="Collagenolytic protease">
    <location>
        <begin position="1"/>
        <end position="17" status="greater than"/>
    </location>
</feature>
<feature type="domain" description="Peptidase S1" evidence="1">
    <location>
        <begin position="1"/>
        <end position="17" status="greater than"/>
    </location>
</feature>
<feature type="non-terminal residue" evidence="3">
    <location>
        <position position="17"/>
    </location>
</feature>
<name>COG2_CARMA</name>
<protein>
    <recommendedName>
        <fullName>Collagenolytic protease</fullName>
        <ecNumber>3.4.21.32</ecNumber>
    </recommendedName>
    <alternativeName>
        <fullName>CSC</fullName>
    </alternativeName>
</protein>
<evidence type="ECO:0000255" key="1">
    <source>
        <dbReference type="PROSITE-ProRule" id="PRU00274"/>
    </source>
</evidence>
<evidence type="ECO:0000269" key="2">
    <source>
    </source>
</evidence>
<evidence type="ECO:0000303" key="3">
    <source>
    </source>
</evidence>
<evidence type="ECO:0000305" key="4"/>
<sequence length="17" mass="1817">IVGGMEATPHSWPHQVA</sequence>